<feature type="chain" id="PRO_0000081083" description="Transcriptional regulatory protein CssR">
    <location>
        <begin position="1"/>
        <end position="225"/>
    </location>
</feature>
<feature type="domain" description="Response regulatory" evidence="1">
    <location>
        <begin position="4"/>
        <end position="117"/>
    </location>
</feature>
<feature type="DNA-binding region" description="OmpR/PhoB-type" evidence="2">
    <location>
        <begin position="129"/>
        <end position="224"/>
    </location>
</feature>
<feature type="modified residue" description="4-aspartylphosphate" evidence="1">
    <location>
        <position position="52"/>
    </location>
</feature>
<feature type="strand" evidence="5">
    <location>
        <begin position="137"/>
        <end position="140"/>
    </location>
</feature>
<feature type="turn" evidence="5">
    <location>
        <begin position="141"/>
        <end position="144"/>
    </location>
</feature>
<feature type="strand" evidence="5">
    <location>
        <begin position="145"/>
        <end position="148"/>
    </location>
</feature>
<feature type="helix" evidence="5">
    <location>
        <begin position="158"/>
        <end position="168"/>
    </location>
</feature>
<feature type="helix" evidence="5">
    <location>
        <begin position="177"/>
        <end position="184"/>
    </location>
</feature>
<feature type="helix" evidence="5">
    <location>
        <begin position="194"/>
        <end position="206"/>
    </location>
</feature>
<feature type="strand" evidence="5">
    <location>
        <begin position="212"/>
        <end position="215"/>
    </location>
</feature>
<feature type="turn" evidence="5">
    <location>
        <begin position="216"/>
        <end position="218"/>
    </location>
</feature>
<feature type="strand" evidence="5">
    <location>
        <begin position="219"/>
        <end position="222"/>
    </location>
</feature>
<comment type="function">
    <text evidence="3">Member of the two-component regulatory system CssS/CssR required to control the cellular response to secretion stress.</text>
</comment>
<comment type="subcellular location">
    <subcellularLocation>
        <location evidence="4">Cytoplasm</location>
    </subcellularLocation>
</comment>
<comment type="PTM">
    <text evidence="4">Phosphorylated by CssS.</text>
</comment>
<comment type="sequence caution" evidence="4">
    <conflict type="frameshift">
        <sequence resource="EMBL-CDS" id="CAB07967"/>
    </conflict>
</comment>
<protein>
    <recommendedName>
        <fullName>Transcriptional regulatory protein CssR</fullName>
    </recommendedName>
</protein>
<evidence type="ECO:0000255" key="1">
    <source>
        <dbReference type="PROSITE-ProRule" id="PRU00169"/>
    </source>
</evidence>
<evidence type="ECO:0000255" key="2">
    <source>
        <dbReference type="PROSITE-ProRule" id="PRU01091"/>
    </source>
</evidence>
<evidence type="ECO:0000269" key="3">
    <source>
    </source>
</evidence>
<evidence type="ECO:0000305" key="4"/>
<evidence type="ECO:0007829" key="5">
    <source>
        <dbReference type="PDB" id="7CX5"/>
    </source>
</evidence>
<dbReference type="EMBL" id="Z93941">
    <property type="protein sequence ID" value="CAB07967.1"/>
    <property type="status" value="ALT_FRAME"/>
    <property type="molecule type" value="Genomic_DNA"/>
</dbReference>
<dbReference type="EMBL" id="AJ223978">
    <property type="protein sequence ID" value="CAA11752.1"/>
    <property type="molecule type" value="Genomic_DNA"/>
</dbReference>
<dbReference type="EMBL" id="AL009126">
    <property type="protein sequence ID" value="CAB15291.1"/>
    <property type="molecule type" value="Genomic_DNA"/>
</dbReference>
<dbReference type="PIR" id="C70045">
    <property type="entry name" value="C70045"/>
</dbReference>
<dbReference type="RefSeq" id="NP_391181.1">
    <property type="nucleotide sequence ID" value="NC_000964.3"/>
</dbReference>
<dbReference type="RefSeq" id="WP_003228529.1">
    <property type="nucleotide sequence ID" value="NZ_OZ025638.1"/>
</dbReference>
<dbReference type="PDB" id="7CX5">
    <property type="method" value="X-ray"/>
    <property type="resolution" value="1.07 A"/>
    <property type="chains" value="A=133-225"/>
</dbReference>
<dbReference type="PDBsum" id="7CX5"/>
<dbReference type="SMR" id="O32192"/>
<dbReference type="FunCoup" id="O32192">
    <property type="interactions" value="174"/>
</dbReference>
<dbReference type="STRING" id="224308.BSU33010"/>
<dbReference type="PaxDb" id="224308-BSU33010"/>
<dbReference type="EnsemblBacteria" id="CAB15291">
    <property type="protein sequence ID" value="CAB15291"/>
    <property type="gene ID" value="BSU_33010"/>
</dbReference>
<dbReference type="GeneID" id="938594"/>
<dbReference type="KEGG" id="bsu:BSU33010"/>
<dbReference type="PATRIC" id="fig|224308.179.peg.3577"/>
<dbReference type="eggNOG" id="COG0745">
    <property type="taxonomic scope" value="Bacteria"/>
</dbReference>
<dbReference type="InParanoid" id="O32192"/>
<dbReference type="OrthoDB" id="9790442at2"/>
<dbReference type="PhylomeDB" id="O32192"/>
<dbReference type="BioCyc" id="BSUB:BSU33010-MONOMER"/>
<dbReference type="Proteomes" id="UP000001570">
    <property type="component" value="Chromosome"/>
</dbReference>
<dbReference type="GO" id="GO:0005829">
    <property type="term" value="C:cytosol"/>
    <property type="evidence" value="ECO:0000318"/>
    <property type="project" value="GO_Central"/>
</dbReference>
<dbReference type="GO" id="GO:0032993">
    <property type="term" value="C:protein-DNA complex"/>
    <property type="evidence" value="ECO:0000318"/>
    <property type="project" value="GO_Central"/>
</dbReference>
<dbReference type="GO" id="GO:0000156">
    <property type="term" value="F:phosphorelay response regulator activity"/>
    <property type="evidence" value="ECO:0000318"/>
    <property type="project" value="GO_Central"/>
</dbReference>
<dbReference type="GO" id="GO:0000976">
    <property type="term" value="F:transcription cis-regulatory region binding"/>
    <property type="evidence" value="ECO:0000318"/>
    <property type="project" value="GO_Central"/>
</dbReference>
<dbReference type="GO" id="GO:0006355">
    <property type="term" value="P:regulation of DNA-templated transcription"/>
    <property type="evidence" value="ECO:0000318"/>
    <property type="project" value="GO_Central"/>
</dbReference>
<dbReference type="CDD" id="cd17574">
    <property type="entry name" value="REC_OmpR"/>
    <property type="match status" value="1"/>
</dbReference>
<dbReference type="CDD" id="cd00383">
    <property type="entry name" value="trans_reg_C"/>
    <property type="match status" value="1"/>
</dbReference>
<dbReference type="FunFam" id="3.40.50.2300:FF:000341">
    <property type="entry name" value="DNA-binding response regulator"/>
    <property type="match status" value="1"/>
</dbReference>
<dbReference type="Gene3D" id="3.40.50.2300">
    <property type="match status" value="1"/>
</dbReference>
<dbReference type="Gene3D" id="6.10.250.690">
    <property type="match status" value="1"/>
</dbReference>
<dbReference type="Gene3D" id="1.10.10.10">
    <property type="entry name" value="Winged helix-like DNA-binding domain superfamily/Winged helix DNA-binding domain"/>
    <property type="match status" value="1"/>
</dbReference>
<dbReference type="InterPro" id="IPR011006">
    <property type="entry name" value="CheY-like_superfamily"/>
</dbReference>
<dbReference type="InterPro" id="IPR001867">
    <property type="entry name" value="OmpR/PhoB-type_DNA-bd"/>
</dbReference>
<dbReference type="InterPro" id="IPR016032">
    <property type="entry name" value="Sig_transdc_resp-reg_C-effctor"/>
</dbReference>
<dbReference type="InterPro" id="IPR001789">
    <property type="entry name" value="Sig_transdc_resp-reg_receiver"/>
</dbReference>
<dbReference type="InterPro" id="IPR039420">
    <property type="entry name" value="WalR-like"/>
</dbReference>
<dbReference type="InterPro" id="IPR036388">
    <property type="entry name" value="WH-like_DNA-bd_sf"/>
</dbReference>
<dbReference type="PANTHER" id="PTHR48111">
    <property type="entry name" value="REGULATOR OF RPOS"/>
    <property type="match status" value="1"/>
</dbReference>
<dbReference type="PANTHER" id="PTHR48111:SF24">
    <property type="entry name" value="TRANSCRIPTIONAL REGULATORY PROTEIN CSSR"/>
    <property type="match status" value="1"/>
</dbReference>
<dbReference type="Pfam" id="PF00072">
    <property type="entry name" value="Response_reg"/>
    <property type="match status" value="1"/>
</dbReference>
<dbReference type="Pfam" id="PF00486">
    <property type="entry name" value="Trans_reg_C"/>
    <property type="match status" value="1"/>
</dbReference>
<dbReference type="SMART" id="SM00448">
    <property type="entry name" value="REC"/>
    <property type="match status" value="1"/>
</dbReference>
<dbReference type="SMART" id="SM00862">
    <property type="entry name" value="Trans_reg_C"/>
    <property type="match status" value="1"/>
</dbReference>
<dbReference type="SUPFAM" id="SSF46894">
    <property type="entry name" value="C-terminal effector domain of the bipartite response regulators"/>
    <property type="match status" value="1"/>
</dbReference>
<dbReference type="SUPFAM" id="SSF52172">
    <property type="entry name" value="CheY-like"/>
    <property type="match status" value="1"/>
</dbReference>
<dbReference type="PROSITE" id="PS51755">
    <property type="entry name" value="OMPR_PHOB"/>
    <property type="match status" value="1"/>
</dbReference>
<dbReference type="PROSITE" id="PS50110">
    <property type="entry name" value="RESPONSE_REGULATORY"/>
    <property type="match status" value="1"/>
</dbReference>
<proteinExistence type="evidence at protein level"/>
<accession>O32192</accession>
<accession>O32304</accession>
<organism>
    <name type="scientific">Bacillus subtilis (strain 168)</name>
    <dbReference type="NCBI Taxonomy" id="224308"/>
    <lineage>
        <taxon>Bacteria</taxon>
        <taxon>Bacillati</taxon>
        <taxon>Bacillota</taxon>
        <taxon>Bacilli</taxon>
        <taxon>Bacillales</taxon>
        <taxon>Bacillaceae</taxon>
        <taxon>Bacillus</taxon>
    </lineage>
</organism>
<keyword id="KW-0002">3D-structure</keyword>
<keyword id="KW-0963">Cytoplasm</keyword>
<keyword id="KW-0238">DNA-binding</keyword>
<keyword id="KW-0597">Phosphoprotein</keyword>
<keyword id="KW-1185">Reference proteome</keyword>
<keyword id="KW-0804">Transcription</keyword>
<keyword id="KW-0805">Transcription regulation</keyword>
<keyword id="KW-0902">Two-component regulatory system</keyword>
<reference key="1">
    <citation type="journal article" date="1997" name="Microbiology">
        <title>Sequencing of regions downstream of addA (98 degrees) and citG (289 degrees) in Bacillus subtilis.</title>
        <authorList>
            <person name="Medina N."/>
            <person name="Vannier F."/>
            <person name="Roche B."/>
            <person name="Autret S."/>
            <person name="Levine A."/>
            <person name="Seror S.J."/>
        </authorList>
    </citation>
    <scope>NUCLEOTIDE SEQUENCE [GENOMIC DNA]</scope>
</reference>
<reference key="2">
    <citation type="journal article" date="1998" name="Microbiology">
        <title>The yvsA-yvqA (293 degrees - 289 degrees) region of the Bacillus subtilis chromosome containing genes involved in metal ion uptake and a putative sigma factor.</title>
        <authorList>
            <person name="Wipat A."/>
            <person name="Brignell C.S."/>
            <person name="Guy J.B."/>
            <person name="Rose M."/>
            <person name="Emmerson P.T."/>
            <person name="Harwood C.R."/>
        </authorList>
    </citation>
    <scope>NUCLEOTIDE SEQUENCE [GENOMIC DNA]</scope>
    <source>
        <strain>168</strain>
    </source>
</reference>
<reference key="3">
    <citation type="journal article" date="1997" name="Nature">
        <title>The complete genome sequence of the Gram-positive bacterium Bacillus subtilis.</title>
        <authorList>
            <person name="Kunst F."/>
            <person name="Ogasawara N."/>
            <person name="Moszer I."/>
            <person name="Albertini A.M."/>
            <person name="Alloni G."/>
            <person name="Azevedo V."/>
            <person name="Bertero M.G."/>
            <person name="Bessieres P."/>
            <person name="Bolotin A."/>
            <person name="Borchert S."/>
            <person name="Borriss R."/>
            <person name="Boursier L."/>
            <person name="Brans A."/>
            <person name="Braun M."/>
            <person name="Brignell S.C."/>
            <person name="Bron S."/>
            <person name="Brouillet S."/>
            <person name="Bruschi C.V."/>
            <person name="Caldwell B."/>
            <person name="Capuano V."/>
            <person name="Carter N.M."/>
            <person name="Choi S.-K."/>
            <person name="Codani J.-J."/>
            <person name="Connerton I.F."/>
            <person name="Cummings N.J."/>
            <person name="Daniel R.A."/>
            <person name="Denizot F."/>
            <person name="Devine K.M."/>
            <person name="Duesterhoeft A."/>
            <person name="Ehrlich S.D."/>
            <person name="Emmerson P.T."/>
            <person name="Entian K.-D."/>
            <person name="Errington J."/>
            <person name="Fabret C."/>
            <person name="Ferrari E."/>
            <person name="Foulger D."/>
            <person name="Fritz C."/>
            <person name="Fujita M."/>
            <person name="Fujita Y."/>
            <person name="Fuma S."/>
            <person name="Galizzi A."/>
            <person name="Galleron N."/>
            <person name="Ghim S.-Y."/>
            <person name="Glaser P."/>
            <person name="Goffeau A."/>
            <person name="Golightly E.J."/>
            <person name="Grandi G."/>
            <person name="Guiseppi G."/>
            <person name="Guy B.J."/>
            <person name="Haga K."/>
            <person name="Haiech J."/>
            <person name="Harwood C.R."/>
            <person name="Henaut A."/>
            <person name="Hilbert H."/>
            <person name="Holsappel S."/>
            <person name="Hosono S."/>
            <person name="Hullo M.-F."/>
            <person name="Itaya M."/>
            <person name="Jones L.-M."/>
            <person name="Joris B."/>
            <person name="Karamata D."/>
            <person name="Kasahara Y."/>
            <person name="Klaerr-Blanchard M."/>
            <person name="Klein C."/>
            <person name="Kobayashi Y."/>
            <person name="Koetter P."/>
            <person name="Koningstein G."/>
            <person name="Krogh S."/>
            <person name="Kumano M."/>
            <person name="Kurita K."/>
            <person name="Lapidus A."/>
            <person name="Lardinois S."/>
            <person name="Lauber J."/>
            <person name="Lazarevic V."/>
            <person name="Lee S.-M."/>
            <person name="Levine A."/>
            <person name="Liu H."/>
            <person name="Masuda S."/>
            <person name="Mauel C."/>
            <person name="Medigue C."/>
            <person name="Medina N."/>
            <person name="Mellado R.P."/>
            <person name="Mizuno M."/>
            <person name="Moestl D."/>
            <person name="Nakai S."/>
            <person name="Noback M."/>
            <person name="Noone D."/>
            <person name="O'Reilly M."/>
            <person name="Ogawa K."/>
            <person name="Ogiwara A."/>
            <person name="Oudega B."/>
            <person name="Park S.-H."/>
            <person name="Parro V."/>
            <person name="Pohl T.M."/>
            <person name="Portetelle D."/>
            <person name="Porwollik S."/>
            <person name="Prescott A.M."/>
            <person name="Presecan E."/>
            <person name="Pujic P."/>
            <person name="Purnelle B."/>
            <person name="Rapoport G."/>
            <person name="Rey M."/>
            <person name="Reynolds S."/>
            <person name="Rieger M."/>
            <person name="Rivolta C."/>
            <person name="Rocha E."/>
            <person name="Roche B."/>
            <person name="Rose M."/>
            <person name="Sadaie Y."/>
            <person name="Sato T."/>
            <person name="Scanlan E."/>
            <person name="Schleich S."/>
            <person name="Schroeter R."/>
            <person name="Scoffone F."/>
            <person name="Sekiguchi J."/>
            <person name="Sekowska A."/>
            <person name="Seror S.J."/>
            <person name="Serror P."/>
            <person name="Shin B.-S."/>
            <person name="Soldo B."/>
            <person name="Sorokin A."/>
            <person name="Tacconi E."/>
            <person name="Takagi T."/>
            <person name="Takahashi H."/>
            <person name="Takemaru K."/>
            <person name="Takeuchi M."/>
            <person name="Tamakoshi A."/>
            <person name="Tanaka T."/>
            <person name="Terpstra P."/>
            <person name="Tognoni A."/>
            <person name="Tosato V."/>
            <person name="Uchiyama S."/>
            <person name="Vandenbol M."/>
            <person name="Vannier F."/>
            <person name="Vassarotti A."/>
            <person name="Viari A."/>
            <person name="Wambutt R."/>
            <person name="Wedler E."/>
            <person name="Wedler H."/>
            <person name="Weitzenegger T."/>
            <person name="Winters P."/>
            <person name="Wipat A."/>
            <person name="Yamamoto H."/>
            <person name="Yamane K."/>
            <person name="Yasumoto K."/>
            <person name="Yata K."/>
            <person name="Yoshida K."/>
            <person name="Yoshikawa H.-F."/>
            <person name="Zumstein E."/>
            <person name="Yoshikawa H."/>
            <person name="Danchin A."/>
        </authorList>
    </citation>
    <scope>NUCLEOTIDE SEQUENCE [LARGE SCALE GENOMIC DNA]</scope>
    <source>
        <strain>168</strain>
    </source>
</reference>
<reference key="4">
    <citation type="journal article" date="2001" name="J. Bacteriol.">
        <title>Comprehensive DNA microarray analysis of Bacillus subtilis two-component regulatory systems.</title>
        <authorList>
            <person name="Kobayashi K."/>
            <person name="Ogura M."/>
            <person name="Yamaguchi H."/>
            <person name="Yoshida K."/>
            <person name="Ogasawara N."/>
            <person name="Tanaka T."/>
            <person name="Fujita Y."/>
        </authorList>
    </citation>
    <scope>FUNCTION</scope>
</reference>
<reference key="5">
    <citation type="journal article" date="2001" name="Mol. Microbiol.">
        <title>A novel two-component regulatory system in Bacillus subtilis for the survival of severe secretion stress.</title>
        <authorList>
            <person name="Hyyrylaeinen H.-L."/>
            <person name="Bolhuis A."/>
            <person name="Darmon E."/>
            <person name="Muukkonen L."/>
            <person name="Koski P."/>
            <person name="Vitikainen M."/>
            <person name="Sarvas M."/>
            <person name="Pragai Z."/>
            <person name="Bron S."/>
            <person name="van Dijl J.M."/>
            <person name="Kontinen V.P."/>
        </authorList>
    </citation>
    <scope>CHARACTERIZATION</scope>
    <source>
        <strain>168</strain>
    </source>
</reference>
<gene>
    <name type="primary">cssR</name>
    <name type="ordered locus">BSU33010</name>
</gene>
<name>CSSR_BACSU</name>
<sequence>MSYTIYLVEDEDNLNELLTKYLENEGWNITSFTKGEDARKKMTPSPHLWILDIMLPDTDGYTLIKEIKAKDPDVPVIFISARDADIDRVLGLELGSNDYISKPFLPRELIIRVQKLLQLVYKEAPPVQKNEIAVSSYRVAEDAREVYDENGNIINLTSKEFDLLLLFIHHKGHPYSREDILLKVWGHDYFGTDRVVDDLVRRLRRKMPELKVETIYGFGYRMMSS</sequence>